<proteinExistence type="inferred from homology"/>
<sequence length="244" mass="27390">MKSLWLDIGNTRLKYWITENQQIIEHAAELHLQSPADLLLGLIQHFKHQGLHRIGISSVLDTENNQRIQQILKWLEIPVVFAKVHAEYAGLQCGYEVPSQLGIDRWLQVLAVAEEKENYCIIGCGTALTIDLTKGKQHLGGYILPNLYLQRDALIQNTKGIKIPDSAFDNLNPGNNTVDAVHHGILLGLISTIESIMQQSPKKLLLTGGDAPLFAKFLQKYQPTVETDLLLKGLQQYIAHYPKD</sequence>
<evidence type="ECO:0000255" key="1">
    <source>
        <dbReference type="HAMAP-Rule" id="MF_01274"/>
    </source>
</evidence>
<keyword id="KW-0067">ATP-binding</keyword>
<keyword id="KW-0173">Coenzyme A biosynthesis</keyword>
<keyword id="KW-0963">Cytoplasm</keyword>
<keyword id="KW-0418">Kinase</keyword>
<keyword id="KW-0547">Nucleotide-binding</keyword>
<keyword id="KW-0630">Potassium</keyword>
<keyword id="KW-0808">Transferase</keyword>
<gene>
    <name evidence="1" type="primary">coaX</name>
    <name type="ordered locus">ABBFA_002818</name>
</gene>
<name>COAX_ACIB3</name>
<organism>
    <name type="scientific">Acinetobacter baumannii (strain AB307-0294)</name>
    <dbReference type="NCBI Taxonomy" id="557600"/>
    <lineage>
        <taxon>Bacteria</taxon>
        <taxon>Pseudomonadati</taxon>
        <taxon>Pseudomonadota</taxon>
        <taxon>Gammaproteobacteria</taxon>
        <taxon>Moraxellales</taxon>
        <taxon>Moraxellaceae</taxon>
        <taxon>Acinetobacter</taxon>
        <taxon>Acinetobacter calcoaceticus/baumannii complex</taxon>
    </lineage>
</organism>
<accession>B7GZ77</accession>
<comment type="function">
    <text evidence="1">Catalyzes the phosphorylation of pantothenate (Pan), the first step in CoA biosynthesis.</text>
</comment>
<comment type="catalytic activity">
    <reaction evidence="1">
        <text>(R)-pantothenate + ATP = (R)-4'-phosphopantothenate + ADP + H(+)</text>
        <dbReference type="Rhea" id="RHEA:16373"/>
        <dbReference type="ChEBI" id="CHEBI:10986"/>
        <dbReference type="ChEBI" id="CHEBI:15378"/>
        <dbReference type="ChEBI" id="CHEBI:29032"/>
        <dbReference type="ChEBI" id="CHEBI:30616"/>
        <dbReference type="ChEBI" id="CHEBI:456216"/>
        <dbReference type="EC" id="2.7.1.33"/>
    </reaction>
</comment>
<comment type="cofactor">
    <cofactor evidence="1">
        <name>NH4(+)</name>
        <dbReference type="ChEBI" id="CHEBI:28938"/>
    </cofactor>
    <cofactor evidence="1">
        <name>K(+)</name>
        <dbReference type="ChEBI" id="CHEBI:29103"/>
    </cofactor>
    <text evidence="1">A monovalent cation. Ammonium or potassium.</text>
</comment>
<comment type="pathway">
    <text evidence="1">Cofactor biosynthesis; coenzyme A biosynthesis; CoA from (R)-pantothenate: step 1/5.</text>
</comment>
<comment type="subunit">
    <text evidence="1">Homodimer.</text>
</comment>
<comment type="subcellular location">
    <subcellularLocation>
        <location evidence="1">Cytoplasm</location>
    </subcellularLocation>
</comment>
<comment type="similarity">
    <text evidence="1">Belongs to the type III pantothenate kinase family.</text>
</comment>
<protein>
    <recommendedName>
        <fullName evidence="1">Type III pantothenate kinase</fullName>
        <ecNumber evidence="1">2.7.1.33</ecNumber>
    </recommendedName>
    <alternativeName>
        <fullName evidence="1">PanK-III</fullName>
    </alternativeName>
    <alternativeName>
        <fullName evidence="1">Pantothenic acid kinase</fullName>
    </alternativeName>
</protein>
<reference key="1">
    <citation type="journal article" date="2008" name="J. Bacteriol.">
        <title>Comparative genome sequence analysis of multidrug-resistant Acinetobacter baumannii.</title>
        <authorList>
            <person name="Adams M.D."/>
            <person name="Goglin K."/>
            <person name="Molyneaux N."/>
            <person name="Hujer K.M."/>
            <person name="Lavender H."/>
            <person name="Jamison J.J."/>
            <person name="MacDonald I.J."/>
            <person name="Martin K.M."/>
            <person name="Russo T."/>
            <person name="Campagnari A.A."/>
            <person name="Hujer A.M."/>
            <person name="Bonomo R.A."/>
            <person name="Gill S.R."/>
        </authorList>
    </citation>
    <scope>NUCLEOTIDE SEQUENCE [LARGE SCALE GENOMIC DNA]</scope>
    <source>
        <strain>AB307-0294</strain>
    </source>
</reference>
<dbReference type="EC" id="2.7.1.33" evidence="1"/>
<dbReference type="EMBL" id="CP001172">
    <property type="protein sequence ID" value="ACJ58965.1"/>
    <property type="molecule type" value="Genomic_DNA"/>
</dbReference>
<dbReference type="RefSeq" id="WP_000839416.1">
    <property type="nucleotide sequence ID" value="NZ_CP001172.1"/>
</dbReference>
<dbReference type="SMR" id="B7GZ77"/>
<dbReference type="HOGENOM" id="CLU_066627_0_1_6"/>
<dbReference type="UniPathway" id="UPA00241">
    <property type="reaction ID" value="UER00352"/>
</dbReference>
<dbReference type="Proteomes" id="UP000006924">
    <property type="component" value="Chromosome"/>
</dbReference>
<dbReference type="GO" id="GO:0005737">
    <property type="term" value="C:cytoplasm"/>
    <property type="evidence" value="ECO:0007669"/>
    <property type="project" value="UniProtKB-SubCell"/>
</dbReference>
<dbReference type="GO" id="GO:0005524">
    <property type="term" value="F:ATP binding"/>
    <property type="evidence" value="ECO:0007669"/>
    <property type="project" value="UniProtKB-UniRule"/>
</dbReference>
<dbReference type="GO" id="GO:0004594">
    <property type="term" value="F:pantothenate kinase activity"/>
    <property type="evidence" value="ECO:0007669"/>
    <property type="project" value="UniProtKB-UniRule"/>
</dbReference>
<dbReference type="GO" id="GO:0015937">
    <property type="term" value="P:coenzyme A biosynthetic process"/>
    <property type="evidence" value="ECO:0007669"/>
    <property type="project" value="UniProtKB-UniRule"/>
</dbReference>
<dbReference type="CDD" id="cd24015">
    <property type="entry name" value="ASKHA_NBD_PanK-III"/>
    <property type="match status" value="1"/>
</dbReference>
<dbReference type="Gene3D" id="3.30.420.40">
    <property type="match status" value="2"/>
</dbReference>
<dbReference type="HAMAP" id="MF_01274">
    <property type="entry name" value="Pantothen_kinase_3"/>
    <property type="match status" value="1"/>
</dbReference>
<dbReference type="InterPro" id="IPR043129">
    <property type="entry name" value="ATPase_NBD"/>
</dbReference>
<dbReference type="InterPro" id="IPR004619">
    <property type="entry name" value="Type_III_PanK"/>
</dbReference>
<dbReference type="NCBIfam" id="TIGR00671">
    <property type="entry name" value="baf"/>
    <property type="match status" value="1"/>
</dbReference>
<dbReference type="NCBIfam" id="NF009856">
    <property type="entry name" value="PRK13322.1-1"/>
    <property type="match status" value="1"/>
</dbReference>
<dbReference type="PANTHER" id="PTHR34265">
    <property type="entry name" value="TYPE III PANTOTHENATE KINASE"/>
    <property type="match status" value="1"/>
</dbReference>
<dbReference type="PANTHER" id="PTHR34265:SF1">
    <property type="entry name" value="TYPE III PANTOTHENATE KINASE"/>
    <property type="match status" value="1"/>
</dbReference>
<dbReference type="Pfam" id="PF03309">
    <property type="entry name" value="Pan_kinase"/>
    <property type="match status" value="1"/>
</dbReference>
<dbReference type="SUPFAM" id="SSF53067">
    <property type="entry name" value="Actin-like ATPase domain"/>
    <property type="match status" value="2"/>
</dbReference>
<feature type="chain" id="PRO_1000140209" description="Type III pantothenate kinase">
    <location>
        <begin position="1"/>
        <end position="244"/>
    </location>
</feature>
<feature type="active site" description="Proton acceptor" evidence="1">
    <location>
        <position position="104"/>
    </location>
</feature>
<feature type="binding site" evidence="1">
    <location>
        <begin position="7"/>
        <end position="14"/>
    </location>
    <ligand>
        <name>ATP</name>
        <dbReference type="ChEBI" id="CHEBI:30616"/>
    </ligand>
</feature>
<feature type="binding site" evidence="1">
    <location>
        <position position="95"/>
    </location>
    <ligand>
        <name>substrate</name>
    </ligand>
</feature>
<feature type="binding site" evidence="1">
    <location>
        <begin position="102"/>
        <end position="105"/>
    </location>
    <ligand>
        <name>substrate</name>
    </ligand>
</feature>
<feature type="binding site" evidence="1">
    <location>
        <position position="126"/>
    </location>
    <ligand>
        <name>ATP</name>
        <dbReference type="ChEBI" id="CHEBI:30616"/>
    </ligand>
</feature>
<feature type="binding site" evidence="1">
    <location>
        <position position="177"/>
    </location>
    <ligand>
        <name>substrate</name>
    </ligand>
</feature>